<accession>Q7VPP0</accession>
<comment type="function">
    <text evidence="1">Produces ATP from ADP in the presence of a proton gradient across the membrane. The catalytic sites are hosted primarily by the beta subunits.</text>
</comment>
<comment type="catalytic activity">
    <reaction evidence="1">
        <text>ATP + H2O + 4 H(+)(in) = ADP + phosphate + 5 H(+)(out)</text>
        <dbReference type="Rhea" id="RHEA:57720"/>
        <dbReference type="ChEBI" id="CHEBI:15377"/>
        <dbReference type="ChEBI" id="CHEBI:15378"/>
        <dbReference type="ChEBI" id="CHEBI:30616"/>
        <dbReference type="ChEBI" id="CHEBI:43474"/>
        <dbReference type="ChEBI" id="CHEBI:456216"/>
        <dbReference type="EC" id="7.1.2.2"/>
    </reaction>
</comment>
<comment type="subunit">
    <text evidence="1">F-type ATPases have 2 components, CF(1) - the catalytic core - and CF(0) - the membrane proton channel. CF(1) has five subunits: alpha(3), beta(3), gamma(1), delta(1), epsilon(1). CF(0) has three main subunits: a(1), b(2) and c(9-12). The alpha and beta chains form an alternating ring which encloses part of the gamma chain. CF(1) is attached to CF(0) by a central stalk formed by the gamma and epsilon chains, while a peripheral stalk is formed by the delta and b chains.</text>
</comment>
<comment type="subcellular location">
    <subcellularLocation>
        <location evidence="1">Cell inner membrane</location>
        <topology evidence="1">Peripheral membrane protein</topology>
    </subcellularLocation>
</comment>
<comment type="similarity">
    <text evidence="1">Belongs to the ATPase alpha/beta chains family.</text>
</comment>
<name>ATPB_HAEDU</name>
<evidence type="ECO:0000255" key="1">
    <source>
        <dbReference type="HAMAP-Rule" id="MF_01347"/>
    </source>
</evidence>
<keyword id="KW-0066">ATP synthesis</keyword>
<keyword id="KW-0067">ATP-binding</keyword>
<keyword id="KW-0997">Cell inner membrane</keyword>
<keyword id="KW-1003">Cell membrane</keyword>
<keyword id="KW-0139">CF(1)</keyword>
<keyword id="KW-0375">Hydrogen ion transport</keyword>
<keyword id="KW-0406">Ion transport</keyword>
<keyword id="KW-0472">Membrane</keyword>
<keyword id="KW-0547">Nucleotide-binding</keyword>
<keyword id="KW-1185">Reference proteome</keyword>
<keyword id="KW-1278">Translocase</keyword>
<keyword id="KW-0813">Transport</keyword>
<reference key="1">
    <citation type="submission" date="2003-06" db="EMBL/GenBank/DDBJ databases">
        <title>The complete genome sequence of Haemophilus ducreyi.</title>
        <authorList>
            <person name="Munson R.S. Jr."/>
            <person name="Ray W.C."/>
            <person name="Mahairas G."/>
            <person name="Sabo P."/>
            <person name="Mungur R."/>
            <person name="Johnson L."/>
            <person name="Nguyen D."/>
            <person name="Wang J."/>
            <person name="Forst C."/>
            <person name="Hood L."/>
        </authorList>
    </citation>
    <scope>NUCLEOTIDE SEQUENCE [LARGE SCALE GENOMIC DNA]</scope>
    <source>
        <strain>35000HP / ATCC 700724</strain>
    </source>
</reference>
<sequence>MATGKIVQIIGAVIDVEFPQDAVPKVYDALKVESGLTLEVQQQLGGGLVRCIALGTSDGLKRGLKVENTGNPIQVPVGTKTLGRIMNVLGEPIDEKGPIGEEARWDIHRAAPSYEEQSNSTELLETGIKVIDLICPFAKGGKVGLFGGAGVGKTVNMMELIRNIAIEHSGYSVFAGVGERTREGNDFYHEMTDSNVLDKVSLVYGQMNEPPGNRLRVALTGLTMAEKFRDEGRDVLFFVDNIYRYTLAGTEVSALLGRMPSAVGYQPTLAEEMGVLQERITSTKTGSITSVQAVYVPADDLTDPSPATTFAHLDSTVVLSRNIASLGIYPAVDPLDSTSRQLDPLVVGEEHYNVARGVQGTLQRYKELKDIIAILGMDELSEDDKLVVSRARKIERFLSQPFFVAEVFTGSPGKYVSLKDTIRGFKGILEGEFDHIPEQAFYMAGSIDEVVERASKM</sequence>
<feature type="chain" id="PRO_0000244269" description="ATP synthase subunit beta">
    <location>
        <begin position="1"/>
        <end position="457"/>
    </location>
</feature>
<feature type="binding site" evidence="1">
    <location>
        <begin position="147"/>
        <end position="154"/>
    </location>
    <ligand>
        <name>ATP</name>
        <dbReference type="ChEBI" id="CHEBI:30616"/>
    </ligand>
</feature>
<organism>
    <name type="scientific">Haemophilus ducreyi (strain 35000HP / ATCC 700724)</name>
    <dbReference type="NCBI Taxonomy" id="233412"/>
    <lineage>
        <taxon>Bacteria</taxon>
        <taxon>Pseudomonadati</taxon>
        <taxon>Pseudomonadota</taxon>
        <taxon>Gammaproteobacteria</taxon>
        <taxon>Pasteurellales</taxon>
        <taxon>Pasteurellaceae</taxon>
        <taxon>Haemophilus</taxon>
    </lineage>
</organism>
<gene>
    <name evidence="1" type="primary">atpD</name>
    <name type="ordered locus">HD_0010</name>
</gene>
<protein>
    <recommendedName>
        <fullName evidence="1">ATP synthase subunit beta</fullName>
        <ecNumber evidence="1">7.1.2.2</ecNumber>
    </recommendedName>
    <alternativeName>
        <fullName evidence="1">ATP synthase F1 sector subunit beta</fullName>
    </alternativeName>
    <alternativeName>
        <fullName evidence="1">F-ATPase subunit beta</fullName>
    </alternativeName>
</protein>
<dbReference type="EC" id="7.1.2.2" evidence="1"/>
<dbReference type="EMBL" id="AE017143">
    <property type="protein sequence ID" value="AAP95034.1"/>
    <property type="molecule type" value="Genomic_DNA"/>
</dbReference>
<dbReference type="RefSeq" id="WP_010944088.1">
    <property type="nucleotide sequence ID" value="NC_002940.2"/>
</dbReference>
<dbReference type="SMR" id="Q7VPP0"/>
<dbReference type="STRING" id="233412.HD_0010"/>
<dbReference type="KEGG" id="hdu:HD_0010"/>
<dbReference type="eggNOG" id="COG0055">
    <property type="taxonomic scope" value="Bacteria"/>
</dbReference>
<dbReference type="HOGENOM" id="CLU_022398_0_2_6"/>
<dbReference type="OrthoDB" id="9801639at2"/>
<dbReference type="Proteomes" id="UP000001022">
    <property type="component" value="Chromosome"/>
</dbReference>
<dbReference type="GO" id="GO:0005886">
    <property type="term" value="C:plasma membrane"/>
    <property type="evidence" value="ECO:0007669"/>
    <property type="project" value="UniProtKB-SubCell"/>
</dbReference>
<dbReference type="GO" id="GO:0045259">
    <property type="term" value="C:proton-transporting ATP synthase complex"/>
    <property type="evidence" value="ECO:0007669"/>
    <property type="project" value="UniProtKB-KW"/>
</dbReference>
<dbReference type="GO" id="GO:0005524">
    <property type="term" value="F:ATP binding"/>
    <property type="evidence" value="ECO:0007669"/>
    <property type="project" value="UniProtKB-UniRule"/>
</dbReference>
<dbReference type="GO" id="GO:0016887">
    <property type="term" value="F:ATP hydrolysis activity"/>
    <property type="evidence" value="ECO:0007669"/>
    <property type="project" value="InterPro"/>
</dbReference>
<dbReference type="GO" id="GO:0046933">
    <property type="term" value="F:proton-transporting ATP synthase activity, rotational mechanism"/>
    <property type="evidence" value="ECO:0007669"/>
    <property type="project" value="UniProtKB-UniRule"/>
</dbReference>
<dbReference type="CDD" id="cd18110">
    <property type="entry name" value="ATP-synt_F1_beta_C"/>
    <property type="match status" value="1"/>
</dbReference>
<dbReference type="CDD" id="cd18115">
    <property type="entry name" value="ATP-synt_F1_beta_N"/>
    <property type="match status" value="1"/>
</dbReference>
<dbReference type="CDD" id="cd01133">
    <property type="entry name" value="F1-ATPase_beta_CD"/>
    <property type="match status" value="1"/>
</dbReference>
<dbReference type="FunFam" id="1.10.1140.10:FF:000001">
    <property type="entry name" value="ATP synthase subunit beta"/>
    <property type="match status" value="1"/>
</dbReference>
<dbReference type="FunFam" id="2.40.10.170:FF:000003">
    <property type="entry name" value="ATP synthase subunit beta"/>
    <property type="match status" value="1"/>
</dbReference>
<dbReference type="FunFam" id="3.40.50.300:FF:000004">
    <property type="entry name" value="ATP synthase subunit beta"/>
    <property type="match status" value="1"/>
</dbReference>
<dbReference type="Gene3D" id="2.40.10.170">
    <property type="match status" value="1"/>
</dbReference>
<dbReference type="Gene3D" id="1.10.1140.10">
    <property type="entry name" value="Bovine Mitochondrial F1-atpase, Atp Synthase Beta Chain, Chain D, domain 3"/>
    <property type="match status" value="1"/>
</dbReference>
<dbReference type="Gene3D" id="3.40.50.300">
    <property type="entry name" value="P-loop containing nucleotide triphosphate hydrolases"/>
    <property type="match status" value="1"/>
</dbReference>
<dbReference type="HAMAP" id="MF_01347">
    <property type="entry name" value="ATP_synth_beta_bact"/>
    <property type="match status" value="1"/>
</dbReference>
<dbReference type="InterPro" id="IPR003593">
    <property type="entry name" value="AAA+_ATPase"/>
</dbReference>
<dbReference type="InterPro" id="IPR055190">
    <property type="entry name" value="ATP-synt_VA_C"/>
</dbReference>
<dbReference type="InterPro" id="IPR005722">
    <property type="entry name" value="ATP_synth_F1_bsu"/>
</dbReference>
<dbReference type="InterPro" id="IPR020003">
    <property type="entry name" value="ATPase_a/bsu_AS"/>
</dbReference>
<dbReference type="InterPro" id="IPR050053">
    <property type="entry name" value="ATPase_alpha/beta_chains"/>
</dbReference>
<dbReference type="InterPro" id="IPR004100">
    <property type="entry name" value="ATPase_F1/V1/A1_a/bsu_N"/>
</dbReference>
<dbReference type="InterPro" id="IPR036121">
    <property type="entry name" value="ATPase_F1/V1/A1_a/bsu_N_sf"/>
</dbReference>
<dbReference type="InterPro" id="IPR000194">
    <property type="entry name" value="ATPase_F1/V1/A1_a/bsu_nucl-bd"/>
</dbReference>
<dbReference type="InterPro" id="IPR024034">
    <property type="entry name" value="ATPase_F1/V1_b/a_C"/>
</dbReference>
<dbReference type="InterPro" id="IPR027417">
    <property type="entry name" value="P-loop_NTPase"/>
</dbReference>
<dbReference type="NCBIfam" id="TIGR01039">
    <property type="entry name" value="atpD"/>
    <property type="match status" value="1"/>
</dbReference>
<dbReference type="PANTHER" id="PTHR15184">
    <property type="entry name" value="ATP SYNTHASE"/>
    <property type="match status" value="1"/>
</dbReference>
<dbReference type="PANTHER" id="PTHR15184:SF71">
    <property type="entry name" value="ATP SYNTHASE SUBUNIT BETA, MITOCHONDRIAL"/>
    <property type="match status" value="1"/>
</dbReference>
<dbReference type="Pfam" id="PF00006">
    <property type="entry name" value="ATP-synt_ab"/>
    <property type="match status" value="1"/>
</dbReference>
<dbReference type="Pfam" id="PF02874">
    <property type="entry name" value="ATP-synt_ab_N"/>
    <property type="match status" value="1"/>
</dbReference>
<dbReference type="Pfam" id="PF22919">
    <property type="entry name" value="ATP-synt_VA_C"/>
    <property type="match status" value="1"/>
</dbReference>
<dbReference type="SMART" id="SM00382">
    <property type="entry name" value="AAA"/>
    <property type="match status" value="1"/>
</dbReference>
<dbReference type="SUPFAM" id="SSF47917">
    <property type="entry name" value="C-terminal domain of alpha and beta subunits of F1 ATP synthase"/>
    <property type="match status" value="1"/>
</dbReference>
<dbReference type="SUPFAM" id="SSF50615">
    <property type="entry name" value="N-terminal domain of alpha and beta subunits of F1 ATP synthase"/>
    <property type="match status" value="1"/>
</dbReference>
<dbReference type="SUPFAM" id="SSF52540">
    <property type="entry name" value="P-loop containing nucleoside triphosphate hydrolases"/>
    <property type="match status" value="1"/>
</dbReference>
<dbReference type="PROSITE" id="PS00152">
    <property type="entry name" value="ATPASE_ALPHA_BETA"/>
    <property type="match status" value="1"/>
</dbReference>
<proteinExistence type="inferred from homology"/>